<protein>
    <recommendedName>
        <fullName evidence="1">Phenylalanine--tRNA ligase alpha subunit</fullName>
        <ecNumber evidence="1">6.1.1.20</ecNumber>
    </recommendedName>
    <alternativeName>
        <fullName evidence="1">Phenylalanyl-tRNA synthetase alpha subunit</fullName>
        <shortName evidence="1">PheRS</shortName>
    </alternativeName>
</protein>
<dbReference type="EC" id="6.1.1.20" evidence="1"/>
<dbReference type="EMBL" id="CP000348">
    <property type="protein sequence ID" value="ABJ77785.1"/>
    <property type="molecule type" value="Genomic_DNA"/>
</dbReference>
<dbReference type="RefSeq" id="WP_002724720.1">
    <property type="nucleotide sequence ID" value="NC_008508.1"/>
</dbReference>
<dbReference type="SMR" id="Q056G0"/>
<dbReference type="GeneID" id="61175341"/>
<dbReference type="KEGG" id="lbl:LBL_0168"/>
<dbReference type="HOGENOM" id="CLU_025086_0_1_12"/>
<dbReference type="GO" id="GO:0005737">
    <property type="term" value="C:cytoplasm"/>
    <property type="evidence" value="ECO:0007669"/>
    <property type="project" value="UniProtKB-SubCell"/>
</dbReference>
<dbReference type="GO" id="GO:0005524">
    <property type="term" value="F:ATP binding"/>
    <property type="evidence" value="ECO:0007669"/>
    <property type="project" value="UniProtKB-UniRule"/>
</dbReference>
<dbReference type="GO" id="GO:0000287">
    <property type="term" value="F:magnesium ion binding"/>
    <property type="evidence" value="ECO:0007669"/>
    <property type="project" value="UniProtKB-UniRule"/>
</dbReference>
<dbReference type="GO" id="GO:0004826">
    <property type="term" value="F:phenylalanine-tRNA ligase activity"/>
    <property type="evidence" value="ECO:0007669"/>
    <property type="project" value="UniProtKB-UniRule"/>
</dbReference>
<dbReference type="GO" id="GO:0000049">
    <property type="term" value="F:tRNA binding"/>
    <property type="evidence" value="ECO:0007669"/>
    <property type="project" value="InterPro"/>
</dbReference>
<dbReference type="GO" id="GO:0006432">
    <property type="term" value="P:phenylalanyl-tRNA aminoacylation"/>
    <property type="evidence" value="ECO:0007669"/>
    <property type="project" value="UniProtKB-UniRule"/>
</dbReference>
<dbReference type="CDD" id="cd00496">
    <property type="entry name" value="PheRS_alpha_core"/>
    <property type="match status" value="1"/>
</dbReference>
<dbReference type="FunFam" id="3.30.930.10:FF:000089">
    <property type="entry name" value="Phenylalanine--tRNA ligase alpha subunit"/>
    <property type="match status" value="1"/>
</dbReference>
<dbReference type="Gene3D" id="3.30.930.10">
    <property type="entry name" value="Bira Bifunctional Protein, Domain 2"/>
    <property type="match status" value="1"/>
</dbReference>
<dbReference type="HAMAP" id="MF_00281">
    <property type="entry name" value="Phe_tRNA_synth_alpha1"/>
    <property type="match status" value="1"/>
</dbReference>
<dbReference type="InterPro" id="IPR006195">
    <property type="entry name" value="aa-tRNA-synth_II"/>
</dbReference>
<dbReference type="InterPro" id="IPR045864">
    <property type="entry name" value="aa-tRNA-synth_II/BPL/LPL"/>
</dbReference>
<dbReference type="InterPro" id="IPR004529">
    <property type="entry name" value="Phe-tRNA-synth_IIc_asu"/>
</dbReference>
<dbReference type="InterPro" id="IPR004188">
    <property type="entry name" value="Phe-tRNA_ligase_II_N"/>
</dbReference>
<dbReference type="InterPro" id="IPR022911">
    <property type="entry name" value="Phe_tRNA_ligase_alpha1_bac"/>
</dbReference>
<dbReference type="InterPro" id="IPR002319">
    <property type="entry name" value="Phenylalanyl-tRNA_Synthase"/>
</dbReference>
<dbReference type="InterPro" id="IPR010978">
    <property type="entry name" value="tRNA-bd_arm"/>
</dbReference>
<dbReference type="NCBIfam" id="TIGR00468">
    <property type="entry name" value="pheS"/>
    <property type="match status" value="1"/>
</dbReference>
<dbReference type="PANTHER" id="PTHR11538:SF41">
    <property type="entry name" value="PHENYLALANINE--TRNA LIGASE, MITOCHONDRIAL"/>
    <property type="match status" value="1"/>
</dbReference>
<dbReference type="PANTHER" id="PTHR11538">
    <property type="entry name" value="PHENYLALANYL-TRNA SYNTHETASE"/>
    <property type="match status" value="1"/>
</dbReference>
<dbReference type="Pfam" id="PF02912">
    <property type="entry name" value="Phe_tRNA-synt_N"/>
    <property type="match status" value="1"/>
</dbReference>
<dbReference type="Pfam" id="PF01409">
    <property type="entry name" value="tRNA-synt_2d"/>
    <property type="match status" value="1"/>
</dbReference>
<dbReference type="SUPFAM" id="SSF55681">
    <property type="entry name" value="Class II aaRS and biotin synthetases"/>
    <property type="match status" value="1"/>
</dbReference>
<dbReference type="SUPFAM" id="SSF46589">
    <property type="entry name" value="tRNA-binding arm"/>
    <property type="match status" value="1"/>
</dbReference>
<dbReference type="PROSITE" id="PS50862">
    <property type="entry name" value="AA_TRNA_LIGASE_II"/>
    <property type="match status" value="1"/>
</dbReference>
<feature type="chain" id="PRO_1000006856" description="Phenylalanine--tRNA ligase alpha subunit">
    <location>
        <begin position="1"/>
        <end position="341"/>
    </location>
</feature>
<feature type="binding site" evidence="1">
    <location>
        <position position="256"/>
    </location>
    <ligand>
        <name>Mg(2+)</name>
        <dbReference type="ChEBI" id="CHEBI:18420"/>
        <note>shared with beta subunit</note>
    </ligand>
</feature>
<comment type="catalytic activity">
    <reaction evidence="1">
        <text>tRNA(Phe) + L-phenylalanine + ATP = L-phenylalanyl-tRNA(Phe) + AMP + diphosphate + H(+)</text>
        <dbReference type="Rhea" id="RHEA:19413"/>
        <dbReference type="Rhea" id="RHEA-COMP:9668"/>
        <dbReference type="Rhea" id="RHEA-COMP:9699"/>
        <dbReference type="ChEBI" id="CHEBI:15378"/>
        <dbReference type="ChEBI" id="CHEBI:30616"/>
        <dbReference type="ChEBI" id="CHEBI:33019"/>
        <dbReference type="ChEBI" id="CHEBI:58095"/>
        <dbReference type="ChEBI" id="CHEBI:78442"/>
        <dbReference type="ChEBI" id="CHEBI:78531"/>
        <dbReference type="ChEBI" id="CHEBI:456215"/>
        <dbReference type="EC" id="6.1.1.20"/>
    </reaction>
</comment>
<comment type="cofactor">
    <cofactor evidence="1">
        <name>Mg(2+)</name>
        <dbReference type="ChEBI" id="CHEBI:18420"/>
    </cofactor>
    <text evidence="1">Binds 2 magnesium ions per tetramer.</text>
</comment>
<comment type="subunit">
    <text evidence="1">Tetramer of two alpha and two beta subunits.</text>
</comment>
<comment type="subcellular location">
    <subcellularLocation>
        <location evidence="1">Cytoplasm</location>
    </subcellularLocation>
</comment>
<comment type="similarity">
    <text evidence="1">Belongs to the class-II aminoacyl-tRNA synthetase family. Phe-tRNA synthetase alpha subunit type 1 subfamily.</text>
</comment>
<name>SYFA_LEPBL</name>
<organism>
    <name type="scientific">Leptospira borgpetersenii serovar Hardjo-bovis (strain L550)</name>
    <dbReference type="NCBI Taxonomy" id="355276"/>
    <lineage>
        <taxon>Bacteria</taxon>
        <taxon>Pseudomonadati</taxon>
        <taxon>Spirochaetota</taxon>
        <taxon>Spirochaetia</taxon>
        <taxon>Leptospirales</taxon>
        <taxon>Leptospiraceae</taxon>
        <taxon>Leptospira</taxon>
    </lineage>
</organism>
<accession>Q056G0</accession>
<gene>
    <name evidence="1" type="primary">pheS</name>
    <name type="ordered locus">LBL_0168</name>
</gene>
<proteinExistence type="inferred from homology"/>
<keyword id="KW-0030">Aminoacyl-tRNA synthetase</keyword>
<keyword id="KW-0067">ATP-binding</keyword>
<keyword id="KW-0963">Cytoplasm</keyword>
<keyword id="KW-0436">Ligase</keyword>
<keyword id="KW-0460">Magnesium</keyword>
<keyword id="KW-0479">Metal-binding</keyword>
<keyword id="KW-0547">Nucleotide-binding</keyword>
<keyword id="KW-0648">Protein biosynthesis</keyword>
<evidence type="ECO:0000255" key="1">
    <source>
        <dbReference type="HAMAP-Rule" id="MF_00281"/>
    </source>
</evidence>
<sequence length="341" mass="38665">MNLSEELDSIYQEAIQKIGSSISEEDLDKNKNDFIGKKGKLTAVLKNVALLSIEEKKTIGQKANELSKKLENFVVETKSSLKKKLFETQAASEFFDSLRPLPNASNGSLHPITQIQYEIEDIFTSMGFSIMDGPEIETDTNNFGALNFTDDHPAREMQDTFYLENGNLLRTHTSAIQVRTLRKLKPPFRIIAPGRVFRYEEVDASHEHTFYQIEGMVVGKDISAANLIDTMQVLLSRIFEKEIKTRLRPGYFPFVEPGFELDINCLVCEGKGCPVCKQSGWLELLPCGLIHPNVLSHAGLDPKEWTGFAFGLGLDRLVMMRYGIHDIRYFQSGNLRFLKQF</sequence>
<reference key="1">
    <citation type="journal article" date="2006" name="Proc. Natl. Acad. Sci. U.S.A.">
        <title>Genome reduction in Leptospira borgpetersenii reflects limited transmission potential.</title>
        <authorList>
            <person name="Bulach D.M."/>
            <person name="Zuerner R.L."/>
            <person name="Wilson P."/>
            <person name="Seemann T."/>
            <person name="McGrath A."/>
            <person name="Cullen P.A."/>
            <person name="Davis J."/>
            <person name="Johnson M."/>
            <person name="Kuczek E."/>
            <person name="Alt D.P."/>
            <person name="Peterson-Burch B."/>
            <person name="Coppel R.L."/>
            <person name="Rood J.I."/>
            <person name="Davies J.K."/>
            <person name="Adler B."/>
        </authorList>
    </citation>
    <scope>NUCLEOTIDE SEQUENCE [LARGE SCALE GENOMIC DNA]</scope>
    <source>
        <strain>L550</strain>
    </source>
</reference>